<evidence type="ECO:0000250" key="1"/>
<evidence type="ECO:0000255" key="2">
    <source>
        <dbReference type="HAMAP-Rule" id="MF_03125"/>
    </source>
</evidence>
<evidence type="ECO:0000312" key="3">
    <source>
        <dbReference type="WormBase" id="CBG08829a"/>
    </source>
</evidence>
<proteinExistence type="inferred from homology"/>
<accession>A8X7H5</accession>
<name>PURA_CAEBR</name>
<sequence length="435" mass="47851">MTSAARKVSVLLGAQWGDEGKGKIIDFLIENHKINVTARCQGGNNAGHTVVANGRKYDFHILPSGIISPTCFNVIGNGVVVNLDAFFSELAHNGVLSEPGWEKRIMISSEAHLVFGVHSQVDGRQEDSLAAKNKIGTTNRGIGPTYSSKCFRNGIRVADLMADFEEFSEKYRRLVEHYKKQFPSIEVDVDGELARFKEHREKLAELKLVGDTVGFIHEQRTNGKQVLIEGANGALLDIDFGTYPYVTSSNSTVGGACTGLGVPPTAIGSVIGVVKAYQTRVGTGPFPTELFDADGEKLQSIGKEVGVTTGRKRRCGWIDLFLLRRSAMINGYTDIALTKLDILDTFPTIKVAVGYKLNGQTLTAPPAQTNAWGAVEVEYKEFEGWMEPTVGVRKYEDLPEKCRQYIQFIEEFIKVPIVYIGVGAERESLIVRQKQ</sequence>
<gene>
    <name evidence="3" type="primary">adss-1</name>
    <name evidence="3" type="ORF">CBG08829</name>
</gene>
<feature type="chain" id="PRO_0000399269" description="Adenylosuccinate synthetase">
    <location>
        <begin position="1"/>
        <end position="435"/>
    </location>
</feature>
<feature type="active site" description="Proton acceptor" evidence="2">
    <location>
        <position position="18"/>
    </location>
</feature>
<feature type="active site" description="Proton donor" evidence="2">
    <location>
        <position position="48"/>
    </location>
</feature>
<feature type="binding site" evidence="2">
    <location>
        <begin position="17"/>
        <end position="23"/>
    </location>
    <ligand>
        <name>GTP</name>
        <dbReference type="ChEBI" id="CHEBI:37565"/>
    </ligand>
</feature>
<feature type="binding site" description="in other chain" evidence="2">
    <location>
        <begin position="18"/>
        <end position="21"/>
    </location>
    <ligand>
        <name>IMP</name>
        <dbReference type="ChEBI" id="CHEBI:58053"/>
        <note>ligand shared between dimeric partners</note>
    </ligand>
</feature>
<feature type="binding site" evidence="2">
    <location>
        <position position="18"/>
    </location>
    <ligand>
        <name>Mg(2+)</name>
        <dbReference type="ChEBI" id="CHEBI:18420"/>
    </ligand>
</feature>
<feature type="binding site" description="in other chain" evidence="2">
    <location>
        <begin position="45"/>
        <end position="48"/>
    </location>
    <ligand>
        <name>IMP</name>
        <dbReference type="ChEBI" id="CHEBI:58053"/>
        <note>ligand shared between dimeric partners</note>
    </ligand>
</feature>
<feature type="binding site" evidence="2">
    <location>
        <begin position="47"/>
        <end position="49"/>
    </location>
    <ligand>
        <name>GTP</name>
        <dbReference type="ChEBI" id="CHEBI:37565"/>
    </ligand>
</feature>
<feature type="binding site" evidence="2">
    <location>
        <position position="47"/>
    </location>
    <ligand>
        <name>Mg(2+)</name>
        <dbReference type="ChEBI" id="CHEBI:18420"/>
    </ligand>
</feature>
<feature type="binding site" description="in other chain" evidence="2">
    <location>
        <position position="138"/>
    </location>
    <ligand>
        <name>IMP</name>
        <dbReference type="ChEBI" id="CHEBI:58053"/>
        <note>ligand shared between dimeric partners</note>
    </ligand>
</feature>
<feature type="binding site" evidence="2">
    <location>
        <position position="152"/>
    </location>
    <ligand>
        <name>IMP</name>
        <dbReference type="ChEBI" id="CHEBI:58053"/>
        <note>ligand shared between dimeric partners</note>
    </ligand>
</feature>
<feature type="binding site" description="in other chain" evidence="2">
    <location>
        <position position="232"/>
    </location>
    <ligand>
        <name>IMP</name>
        <dbReference type="ChEBI" id="CHEBI:58053"/>
        <note>ligand shared between dimeric partners</note>
    </ligand>
</feature>
<feature type="binding site" description="in other chain" evidence="2">
    <location>
        <position position="247"/>
    </location>
    <ligand>
        <name>IMP</name>
        <dbReference type="ChEBI" id="CHEBI:58053"/>
        <note>ligand shared between dimeric partners</note>
    </ligand>
</feature>
<feature type="binding site" evidence="2">
    <location>
        <begin position="307"/>
        <end position="313"/>
    </location>
    <ligand>
        <name>substrate</name>
    </ligand>
</feature>
<feature type="binding site" description="in other chain" evidence="2">
    <location>
        <position position="311"/>
    </location>
    <ligand>
        <name>IMP</name>
        <dbReference type="ChEBI" id="CHEBI:58053"/>
        <note>ligand shared between dimeric partners</note>
    </ligand>
</feature>
<feature type="binding site" evidence="2">
    <location>
        <position position="313"/>
    </location>
    <ligand>
        <name>GTP</name>
        <dbReference type="ChEBI" id="CHEBI:37565"/>
    </ligand>
</feature>
<feature type="binding site" evidence="2">
    <location>
        <begin position="339"/>
        <end position="341"/>
    </location>
    <ligand>
        <name>GTP</name>
        <dbReference type="ChEBI" id="CHEBI:37565"/>
    </ligand>
</feature>
<feature type="binding site" evidence="2">
    <location>
        <begin position="421"/>
        <end position="423"/>
    </location>
    <ligand>
        <name>GTP</name>
        <dbReference type="ChEBI" id="CHEBI:37565"/>
    </ligand>
</feature>
<reference key="1">
    <citation type="journal article" date="2003" name="PLoS Biol.">
        <title>The genome sequence of Caenorhabditis briggsae: a platform for comparative genomics.</title>
        <authorList>
            <person name="Stein L.D."/>
            <person name="Bao Z."/>
            <person name="Blasiar D."/>
            <person name="Blumenthal T."/>
            <person name="Brent M.R."/>
            <person name="Chen N."/>
            <person name="Chinwalla A."/>
            <person name="Clarke L."/>
            <person name="Clee C."/>
            <person name="Coghlan A."/>
            <person name="Coulson A."/>
            <person name="D'Eustachio P."/>
            <person name="Fitch D.H.A."/>
            <person name="Fulton L.A."/>
            <person name="Fulton R.E."/>
            <person name="Griffiths-Jones S."/>
            <person name="Harris T.W."/>
            <person name="Hillier L.W."/>
            <person name="Kamath R."/>
            <person name="Kuwabara P.E."/>
            <person name="Mardis E.R."/>
            <person name="Marra M.A."/>
            <person name="Miner T.L."/>
            <person name="Minx P."/>
            <person name="Mullikin J.C."/>
            <person name="Plumb R.W."/>
            <person name="Rogers J."/>
            <person name="Schein J.E."/>
            <person name="Sohrmann M."/>
            <person name="Spieth J."/>
            <person name="Stajich J.E."/>
            <person name="Wei C."/>
            <person name="Willey D."/>
            <person name="Wilson R.K."/>
            <person name="Durbin R.M."/>
            <person name="Waterston R.H."/>
        </authorList>
    </citation>
    <scope>NUCLEOTIDE SEQUENCE [LARGE SCALE GENOMIC DNA]</scope>
    <source>
        <strain>AF16</strain>
    </source>
</reference>
<dbReference type="EC" id="6.3.4.4" evidence="2"/>
<dbReference type="EMBL" id="HE601187">
    <property type="protein sequence ID" value="CAP28586.2"/>
    <property type="molecule type" value="Genomic_DNA"/>
</dbReference>
<dbReference type="SMR" id="A8X7H5"/>
<dbReference type="FunCoup" id="A8X7H5">
    <property type="interactions" value="2227"/>
</dbReference>
<dbReference type="STRING" id="6238.A8X7H5"/>
<dbReference type="EnsemblMetazoa" id="CBG08829a.1">
    <property type="protein sequence ID" value="CBG08829a.1"/>
    <property type="gene ID" value="WBGene00030553"/>
</dbReference>
<dbReference type="WormBase" id="CBG08829a">
    <property type="protein sequence ID" value="CBP37338"/>
    <property type="gene ID" value="WBGene00030553"/>
    <property type="gene designation" value="Cbr-adss-1"/>
</dbReference>
<dbReference type="eggNOG" id="KOG1355">
    <property type="taxonomic scope" value="Eukaryota"/>
</dbReference>
<dbReference type="HOGENOM" id="CLU_029848_0_0_1"/>
<dbReference type="InParanoid" id="A8X7H5"/>
<dbReference type="OMA" id="GVPFKWI"/>
<dbReference type="UniPathway" id="UPA00075">
    <property type="reaction ID" value="UER00335"/>
</dbReference>
<dbReference type="Proteomes" id="UP000008549">
    <property type="component" value="Unassembled WGS sequence"/>
</dbReference>
<dbReference type="GO" id="GO:0005737">
    <property type="term" value="C:cytoplasm"/>
    <property type="evidence" value="ECO:0000318"/>
    <property type="project" value="GO_Central"/>
</dbReference>
<dbReference type="GO" id="GO:0004019">
    <property type="term" value="F:adenylosuccinate synthase activity"/>
    <property type="evidence" value="ECO:0000318"/>
    <property type="project" value="GO_Central"/>
</dbReference>
<dbReference type="GO" id="GO:0005525">
    <property type="term" value="F:GTP binding"/>
    <property type="evidence" value="ECO:0007669"/>
    <property type="project" value="UniProtKB-UniRule"/>
</dbReference>
<dbReference type="GO" id="GO:0000287">
    <property type="term" value="F:magnesium ion binding"/>
    <property type="evidence" value="ECO:0007669"/>
    <property type="project" value="UniProtKB-UniRule"/>
</dbReference>
<dbReference type="GO" id="GO:0044208">
    <property type="term" value="P:'de novo' AMP biosynthetic process"/>
    <property type="evidence" value="ECO:0000318"/>
    <property type="project" value="GO_Central"/>
</dbReference>
<dbReference type="GO" id="GO:0046040">
    <property type="term" value="P:IMP metabolic process"/>
    <property type="evidence" value="ECO:0000318"/>
    <property type="project" value="GO_Central"/>
</dbReference>
<dbReference type="CDD" id="cd03108">
    <property type="entry name" value="AdSS"/>
    <property type="match status" value="1"/>
</dbReference>
<dbReference type="FunFam" id="3.90.170.10:FF:000001">
    <property type="entry name" value="Adenylosuccinate synthetase"/>
    <property type="match status" value="1"/>
</dbReference>
<dbReference type="FunFam" id="1.10.300.10:FF:000002">
    <property type="entry name" value="Adenylosuccinate synthetase, chloroplastic"/>
    <property type="match status" value="1"/>
</dbReference>
<dbReference type="Gene3D" id="3.40.440.10">
    <property type="entry name" value="Adenylosuccinate Synthetase, subunit A, domain 1"/>
    <property type="match status" value="1"/>
</dbReference>
<dbReference type="Gene3D" id="1.10.300.10">
    <property type="entry name" value="Adenylosuccinate Synthetase, subunit A, domain 2"/>
    <property type="match status" value="1"/>
</dbReference>
<dbReference type="Gene3D" id="3.90.170.10">
    <property type="entry name" value="Adenylosuccinate Synthetase, subunit A, domain 3"/>
    <property type="match status" value="1"/>
</dbReference>
<dbReference type="HAMAP" id="MF_00011">
    <property type="entry name" value="Adenylosucc_synth"/>
    <property type="match status" value="1"/>
</dbReference>
<dbReference type="InterPro" id="IPR018220">
    <property type="entry name" value="Adenylosuccin_syn_GTP-bd"/>
</dbReference>
<dbReference type="InterPro" id="IPR033128">
    <property type="entry name" value="Adenylosuccin_syn_Lys_AS"/>
</dbReference>
<dbReference type="InterPro" id="IPR042109">
    <property type="entry name" value="Adenylosuccinate_synth_dom1"/>
</dbReference>
<dbReference type="InterPro" id="IPR042110">
    <property type="entry name" value="Adenylosuccinate_synth_dom2"/>
</dbReference>
<dbReference type="InterPro" id="IPR042111">
    <property type="entry name" value="Adenylosuccinate_synth_dom3"/>
</dbReference>
<dbReference type="InterPro" id="IPR001114">
    <property type="entry name" value="Adenylosuccinate_synthetase"/>
</dbReference>
<dbReference type="InterPro" id="IPR027417">
    <property type="entry name" value="P-loop_NTPase"/>
</dbReference>
<dbReference type="NCBIfam" id="NF002223">
    <property type="entry name" value="PRK01117.1"/>
    <property type="match status" value="1"/>
</dbReference>
<dbReference type="NCBIfam" id="TIGR00184">
    <property type="entry name" value="purA"/>
    <property type="match status" value="1"/>
</dbReference>
<dbReference type="PANTHER" id="PTHR11846">
    <property type="entry name" value="ADENYLOSUCCINATE SYNTHETASE"/>
    <property type="match status" value="1"/>
</dbReference>
<dbReference type="PANTHER" id="PTHR11846:SF0">
    <property type="entry name" value="ADENYLOSUCCINATE SYNTHETASE"/>
    <property type="match status" value="1"/>
</dbReference>
<dbReference type="Pfam" id="PF00709">
    <property type="entry name" value="Adenylsucc_synt"/>
    <property type="match status" value="1"/>
</dbReference>
<dbReference type="SMART" id="SM00788">
    <property type="entry name" value="Adenylsucc_synt"/>
    <property type="match status" value="1"/>
</dbReference>
<dbReference type="SUPFAM" id="SSF52540">
    <property type="entry name" value="P-loop containing nucleoside triphosphate hydrolases"/>
    <property type="match status" value="1"/>
</dbReference>
<dbReference type="PROSITE" id="PS01266">
    <property type="entry name" value="ADENYLOSUCCIN_SYN_1"/>
    <property type="match status" value="1"/>
</dbReference>
<dbReference type="PROSITE" id="PS00513">
    <property type="entry name" value="ADENYLOSUCCIN_SYN_2"/>
    <property type="match status" value="1"/>
</dbReference>
<comment type="function">
    <text evidence="1">Plays an important role in the de novo pathway and in the salvage pathway of purine nucleotide biosynthesis. Catalyzes the first committed step in the biosynthesis of AMP from IMP (By similarity).</text>
</comment>
<comment type="catalytic activity">
    <reaction evidence="2">
        <text>IMP + L-aspartate + GTP = N(6)-(1,2-dicarboxyethyl)-AMP + GDP + phosphate + 2 H(+)</text>
        <dbReference type="Rhea" id="RHEA:15753"/>
        <dbReference type="ChEBI" id="CHEBI:15378"/>
        <dbReference type="ChEBI" id="CHEBI:29991"/>
        <dbReference type="ChEBI" id="CHEBI:37565"/>
        <dbReference type="ChEBI" id="CHEBI:43474"/>
        <dbReference type="ChEBI" id="CHEBI:57567"/>
        <dbReference type="ChEBI" id="CHEBI:58053"/>
        <dbReference type="ChEBI" id="CHEBI:58189"/>
        <dbReference type="EC" id="6.3.4.4"/>
    </reaction>
</comment>
<comment type="cofactor">
    <cofactor evidence="2">
        <name>Mg(2+)</name>
        <dbReference type="ChEBI" id="CHEBI:18420"/>
    </cofactor>
    <text evidence="2">Binds 1 Mg(2+) ion per subunit.</text>
</comment>
<comment type="pathway">
    <text evidence="2">Purine metabolism; AMP biosynthesis via de novo pathway; AMP from IMP: step 1/2.</text>
</comment>
<comment type="subunit">
    <text evidence="2">Homodimer.</text>
</comment>
<comment type="subcellular location">
    <subcellularLocation>
        <location evidence="2">Cytoplasm</location>
    </subcellularLocation>
</comment>
<comment type="similarity">
    <text evidence="2">Belongs to the adenylosuccinate synthetase family.</text>
</comment>
<keyword id="KW-0963">Cytoplasm</keyword>
<keyword id="KW-0342">GTP-binding</keyword>
<keyword id="KW-0436">Ligase</keyword>
<keyword id="KW-0460">Magnesium</keyword>
<keyword id="KW-0479">Metal-binding</keyword>
<keyword id="KW-0547">Nucleotide-binding</keyword>
<keyword id="KW-0658">Purine biosynthesis</keyword>
<keyword id="KW-1185">Reference proteome</keyword>
<organism>
    <name type="scientific">Caenorhabditis briggsae</name>
    <dbReference type="NCBI Taxonomy" id="6238"/>
    <lineage>
        <taxon>Eukaryota</taxon>
        <taxon>Metazoa</taxon>
        <taxon>Ecdysozoa</taxon>
        <taxon>Nematoda</taxon>
        <taxon>Chromadorea</taxon>
        <taxon>Rhabditida</taxon>
        <taxon>Rhabditina</taxon>
        <taxon>Rhabditomorpha</taxon>
        <taxon>Rhabditoidea</taxon>
        <taxon>Rhabditidae</taxon>
        <taxon>Peloderinae</taxon>
        <taxon>Caenorhabditis</taxon>
    </lineage>
</organism>
<protein>
    <recommendedName>
        <fullName evidence="2">Adenylosuccinate synthetase</fullName>
        <shortName evidence="2">AMPSase</shortName>
        <shortName evidence="2">AdSS</shortName>
        <ecNumber evidence="2">6.3.4.4</ecNumber>
    </recommendedName>
    <alternativeName>
        <fullName evidence="2">IMP--aspartate ligase</fullName>
    </alternativeName>
</protein>